<gene>
    <name type="primary">buk</name>
</gene>
<sequence>MYKLLIINP</sequence>
<evidence type="ECO:0000250" key="1"/>
<evidence type="ECO:0000305" key="2"/>
<protein>
    <recommendedName>
        <fullName>Butyrate kinase</fullName>
        <shortName>BK</shortName>
        <ecNumber>2.7.2.7</ecNumber>
    </recommendedName>
    <alternativeName>
        <fullName>CP 38</fullName>
    </alternativeName>
</protein>
<comment type="function">
    <text evidence="1">Catalyzes the conversion of butyryl-CoA through butyryl phosphate to butyrate.</text>
</comment>
<comment type="catalytic activity">
    <reaction>
        <text>butanoate + ATP = butanoyl phosphate + ADP</text>
        <dbReference type="Rhea" id="RHEA:13585"/>
        <dbReference type="ChEBI" id="CHEBI:17968"/>
        <dbReference type="ChEBI" id="CHEBI:30616"/>
        <dbReference type="ChEBI" id="CHEBI:58079"/>
        <dbReference type="ChEBI" id="CHEBI:456216"/>
        <dbReference type="EC" id="2.7.2.7"/>
    </reaction>
</comment>
<comment type="pathway">
    <text>Lipid metabolism; butanoate metabolism.</text>
</comment>
<comment type="subcellular location">
    <subcellularLocation>
        <location>Cytoplasm</location>
    </subcellularLocation>
</comment>
<comment type="similarity">
    <text evidence="2">Belongs to the acetokinase family.</text>
</comment>
<accession>P81337</accession>
<reference key="1">
    <citation type="journal article" date="1998" name="Electrophoresis">
        <title>Two-dimensional gel electrophoresis separation and N-terminal sequence analysis of proteins from Clostridium pasteurianum W5.</title>
        <authorList>
            <person name="Flengsrud R."/>
            <person name="Skjeldal L."/>
        </authorList>
    </citation>
    <scope>PROTEIN SEQUENCE</scope>
    <source>
        <strain>ATCC 6013 / DSM 525 / NCIB 9486 / VKM B-1774 / W5</strain>
    </source>
</reference>
<dbReference type="EC" id="2.7.2.7"/>
<dbReference type="UniPathway" id="UPA00863"/>
<dbReference type="GO" id="GO:0005737">
    <property type="term" value="C:cytoplasm"/>
    <property type="evidence" value="ECO:0007669"/>
    <property type="project" value="UniProtKB-SubCell"/>
</dbReference>
<dbReference type="GO" id="GO:0005524">
    <property type="term" value="F:ATP binding"/>
    <property type="evidence" value="ECO:0007669"/>
    <property type="project" value="UniProtKB-KW"/>
</dbReference>
<dbReference type="GO" id="GO:0047761">
    <property type="term" value="F:butyrate kinase activity"/>
    <property type="evidence" value="ECO:0007669"/>
    <property type="project" value="UniProtKB-EC"/>
</dbReference>
<dbReference type="GO" id="GO:0019605">
    <property type="term" value="P:butyrate metabolic process"/>
    <property type="evidence" value="ECO:0007669"/>
    <property type="project" value="UniProtKB-UniPathway"/>
</dbReference>
<organism>
    <name type="scientific">Clostridium pasteurianum</name>
    <dbReference type="NCBI Taxonomy" id="1501"/>
    <lineage>
        <taxon>Bacteria</taxon>
        <taxon>Bacillati</taxon>
        <taxon>Bacillota</taxon>
        <taxon>Clostridia</taxon>
        <taxon>Eubacteriales</taxon>
        <taxon>Clostridiaceae</taxon>
        <taxon>Clostridium</taxon>
    </lineage>
</organism>
<keyword id="KW-0067">ATP-binding</keyword>
<keyword id="KW-0963">Cytoplasm</keyword>
<keyword id="KW-0903">Direct protein sequencing</keyword>
<keyword id="KW-0418">Kinase</keyword>
<keyword id="KW-0547">Nucleotide-binding</keyword>
<keyword id="KW-0808">Transferase</keyword>
<proteinExistence type="evidence at protein level"/>
<feature type="chain" id="PRO_0000107661" description="Butyrate kinase">
    <location>
        <begin position="1"/>
        <end position="9" status="greater than"/>
    </location>
</feature>
<feature type="non-terminal residue">
    <location>
        <position position="9"/>
    </location>
</feature>
<name>BUK_CLOPA</name>